<reference key="1">
    <citation type="journal article" date="1990" name="Biochem. J.">
        <title>Xylanase B and an arabinofuranosidase from Pseudomonas fluorescens subsp. cellulosa contain identical cellulose-binding domains and are encoded by adjacent genes.</title>
        <authorList>
            <person name="Kellett L.E."/>
            <person name="Poole D.M."/>
            <person name="Ferreira L.M.A."/>
            <person name="Durrant A.J."/>
            <person name="Hazlewood G.P."/>
            <person name="Gilbert H.J."/>
        </authorList>
    </citation>
    <scope>NUCLEOTIDE SEQUENCE [GENOMIC DNA]</scope>
    <scope>PROTEIN SEQUENCE OF 38-46</scope>
</reference>
<reference key="2">
    <citation type="journal article" date="2008" name="J. Bacteriol.">
        <title>Insights into plant cell wall degradation from the genome sequence of the soil bacterium Cellvibrio japonicus.</title>
        <authorList>
            <person name="DeBoy R.T."/>
            <person name="Mongodin E.F."/>
            <person name="Fouts D.E."/>
            <person name="Tailford L.E."/>
            <person name="Khouri H."/>
            <person name="Emerson J.B."/>
            <person name="Mohamoud Y."/>
            <person name="Watkins K."/>
            <person name="Henrissat B."/>
            <person name="Gilbert H.J."/>
            <person name="Nelson K.E."/>
        </authorList>
    </citation>
    <scope>NUCLEOTIDE SEQUENCE [LARGE SCALE GENOMIC DNA]</scope>
    <source>
        <strain>Ueda107</strain>
    </source>
</reference>
<sequence length="619" mass="66440">MINHNKTPNILAKVFKRTCGLVSTGAALAILSQAASAACTYTIDSEWSTGFTANITLKNDTGAAINNWNVNWQYSSNRMTSGWNANFSGTNPYNATNMSWNGSIAPGQSISFGLQGEKNGSTAERPTVTGAACNSATTSSVASSSSTPTTSSSSASSVASALLLQEAQAGFCRVDGTIDNNHTGFTGSGFANTNNAQGAAVVWAIDATSSGRRTLTIRYANGGTANRNGSLVINGGSNGNYTVSLPTTGAWTTWQTATIDVDLVQGNNIVQLSATTAEGLPNIDSLSVVGGTVRAGNCGSVSSSSSVQSSSSSSSTPSQTCELKAPLRWTSTGPLISPKNPGWISIKDPSIVKYNDTYHVYATYYDTAYRSMYTSFTDWNTAQQAPHISMNGSRVGNTVAPQVFYFRPHNKWYLITQWAGAYATTDDIRNPNWSAKQKLLQGEPNGALDFWVICNDTHCYLYFSRDDGVLYVSKTTLANFPNFSGYSIVMEDHRGNGNSYLFEAANVYKLDGQNRYLLMVEAYISGPRFFRSWTATSLDGPWTPLADTEANPFAGNNNVEWSTGKWADGISHGELIRSGHDEKMTVDPCNLEFLYQGASGPGSTYNTIPYKLGLLRLKK</sequence>
<name>XYNC_CELJU</name>
<keyword id="KW-0903">Direct protein sequencing</keyword>
<keyword id="KW-1015">Disulfide bond</keyword>
<keyword id="KW-0326">Glycosidase</keyword>
<keyword id="KW-0378">Hydrolase</keyword>
<keyword id="KW-1185">Reference proteome</keyword>
<keyword id="KW-0964">Secreted</keyword>
<keyword id="KW-0732">Signal</keyword>
<gene>
    <name type="primary">xynC</name>
    <name type="synonym">abf62A</name>
    <name type="ordered locus">CJA_3281</name>
</gene>
<protein>
    <recommendedName>
        <fullName>Alpha-L-arabinofuranosidase C</fullName>
        <ecNumber>3.2.1.55</ecNumber>
    </recommendedName>
    <alternativeName>
        <fullName>Xylanase C</fullName>
    </alternativeName>
</protein>
<dbReference type="EC" id="3.2.1.55"/>
<dbReference type="EMBL" id="X54523">
    <property type="protein sequence ID" value="CAA38390.1"/>
    <property type="status" value="ALT_FRAME"/>
    <property type="molecule type" value="Genomic_DNA"/>
</dbReference>
<dbReference type="EMBL" id="CP000934">
    <property type="protein sequence ID" value="ACE85320.1"/>
    <property type="molecule type" value="Genomic_DNA"/>
</dbReference>
<dbReference type="RefSeq" id="WP_012488857.1">
    <property type="nucleotide sequence ID" value="NC_010995.1"/>
</dbReference>
<dbReference type="SMR" id="P23031"/>
<dbReference type="STRING" id="498211.CJA_3281"/>
<dbReference type="CAZy" id="CBM2">
    <property type="family name" value="Carbohydrate-Binding Module Family 2"/>
</dbReference>
<dbReference type="CAZy" id="CBM35">
    <property type="family name" value="Carbohydrate-Binding Module Family 35"/>
</dbReference>
<dbReference type="CAZy" id="GH62">
    <property type="family name" value="Glycoside Hydrolase Family 62"/>
</dbReference>
<dbReference type="KEGG" id="cja:CJA_3281"/>
<dbReference type="eggNOG" id="COG3509">
    <property type="taxonomic scope" value="Bacteria"/>
</dbReference>
<dbReference type="eggNOG" id="COG3693">
    <property type="taxonomic scope" value="Bacteria"/>
</dbReference>
<dbReference type="HOGENOM" id="CLU_418515_0_0_6"/>
<dbReference type="OrthoDB" id="9760116at2"/>
<dbReference type="UniPathway" id="UPA00697"/>
<dbReference type="Proteomes" id="UP000001036">
    <property type="component" value="Chromosome"/>
</dbReference>
<dbReference type="GO" id="GO:0005576">
    <property type="term" value="C:extracellular region"/>
    <property type="evidence" value="ECO:0007669"/>
    <property type="project" value="UniProtKB-SubCell"/>
</dbReference>
<dbReference type="GO" id="GO:0046556">
    <property type="term" value="F:alpha-L-arabinofuranosidase activity"/>
    <property type="evidence" value="ECO:0007669"/>
    <property type="project" value="UniProtKB-EC"/>
</dbReference>
<dbReference type="GO" id="GO:0030247">
    <property type="term" value="F:polysaccharide binding"/>
    <property type="evidence" value="ECO:0007669"/>
    <property type="project" value="InterPro"/>
</dbReference>
<dbReference type="GO" id="GO:0046373">
    <property type="term" value="P:L-arabinose metabolic process"/>
    <property type="evidence" value="ECO:0007669"/>
    <property type="project" value="InterPro"/>
</dbReference>
<dbReference type="CDD" id="cd04082">
    <property type="entry name" value="CBM35_pectate_lyase-like"/>
    <property type="match status" value="1"/>
</dbReference>
<dbReference type="CDD" id="cd08987">
    <property type="entry name" value="GH62"/>
    <property type="match status" value="1"/>
</dbReference>
<dbReference type="Gene3D" id="2.60.40.290">
    <property type="match status" value="1"/>
</dbReference>
<dbReference type="Gene3D" id="2.60.120.260">
    <property type="entry name" value="Galactose-binding domain-like"/>
    <property type="match status" value="1"/>
</dbReference>
<dbReference type="Gene3D" id="2.115.10.20">
    <property type="entry name" value="Glycosyl hydrolase domain, family 43"/>
    <property type="match status" value="1"/>
</dbReference>
<dbReference type="InterPro" id="IPR001919">
    <property type="entry name" value="CBD2"/>
</dbReference>
<dbReference type="InterPro" id="IPR008965">
    <property type="entry name" value="CBM2/CBM3_carb-bd_dom_sf"/>
</dbReference>
<dbReference type="InterPro" id="IPR012291">
    <property type="entry name" value="CBM2_carb-bd_dom_sf"/>
</dbReference>
<dbReference type="InterPro" id="IPR018366">
    <property type="entry name" value="CBM2_CS"/>
</dbReference>
<dbReference type="InterPro" id="IPR005084">
    <property type="entry name" value="CBM6"/>
</dbReference>
<dbReference type="InterPro" id="IPR008979">
    <property type="entry name" value="Galactose-bd-like_sf"/>
</dbReference>
<dbReference type="InterPro" id="IPR005193">
    <property type="entry name" value="GH62_arabinosidase"/>
</dbReference>
<dbReference type="InterPro" id="IPR023296">
    <property type="entry name" value="Glyco_hydro_beta-prop_sf"/>
</dbReference>
<dbReference type="PANTHER" id="PTHR40631:SF2">
    <property type="entry name" value="ALPHA-L-ARABINOFURANOSIDASE"/>
    <property type="match status" value="1"/>
</dbReference>
<dbReference type="PANTHER" id="PTHR40631">
    <property type="entry name" value="ALPHA-L-ARABINOFURANOSIDASE AXHA-2-RELATED"/>
    <property type="match status" value="1"/>
</dbReference>
<dbReference type="Pfam" id="PF00553">
    <property type="entry name" value="CBM_2"/>
    <property type="match status" value="1"/>
</dbReference>
<dbReference type="Pfam" id="PF03422">
    <property type="entry name" value="CBM_6"/>
    <property type="match status" value="1"/>
</dbReference>
<dbReference type="Pfam" id="PF03664">
    <property type="entry name" value="Glyco_hydro_62"/>
    <property type="match status" value="1"/>
</dbReference>
<dbReference type="SMART" id="SM00637">
    <property type="entry name" value="CBD_II"/>
    <property type="match status" value="1"/>
</dbReference>
<dbReference type="SUPFAM" id="SSF75005">
    <property type="entry name" value="Arabinanase/levansucrase/invertase"/>
    <property type="match status" value="1"/>
</dbReference>
<dbReference type="SUPFAM" id="SSF49384">
    <property type="entry name" value="Carbohydrate-binding domain"/>
    <property type="match status" value="1"/>
</dbReference>
<dbReference type="SUPFAM" id="SSF49785">
    <property type="entry name" value="Galactose-binding domain-like"/>
    <property type="match status" value="1"/>
</dbReference>
<dbReference type="PROSITE" id="PS51173">
    <property type="entry name" value="CBM2"/>
    <property type="match status" value="1"/>
</dbReference>
<dbReference type="PROSITE" id="PS00561">
    <property type="entry name" value="CBM2_A"/>
    <property type="match status" value="1"/>
</dbReference>
<dbReference type="PROSITE" id="PS51175">
    <property type="entry name" value="CBM6"/>
    <property type="match status" value="1"/>
</dbReference>
<feature type="signal peptide" evidence="5">
    <location>
        <begin position="1"/>
        <end position="37"/>
    </location>
</feature>
<feature type="chain" id="PRO_0000008033" description="Alpha-L-arabinofuranosidase C">
    <location>
        <begin position="38"/>
        <end position="619"/>
    </location>
</feature>
<feature type="domain" description="CBM2" evidence="3">
    <location>
        <begin position="38"/>
        <end position="136"/>
    </location>
</feature>
<feature type="domain" description="CBM6" evidence="2">
    <location>
        <begin position="163"/>
        <end position="289"/>
    </location>
</feature>
<feature type="region of interest" description="Disordered" evidence="4">
    <location>
        <begin position="300"/>
        <end position="319"/>
    </location>
</feature>
<feature type="disulfide bond" evidence="1">
    <location>
        <begin position="39"/>
        <end position="133"/>
    </location>
</feature>
<feature type="sequence conflict" description="In Ref. 1; CAA38390." evidence="6" ref="1">
    <original>NNNVEWSTGKWADGISHGELIRSGHDEKMTVDPCN</original>
    <variation>MMFCFTMASSLKVYTCY</variation>
    <location>
        <begin position="556"/>
        <end position="590"/>
    </location>
</feature>
<proteinExistence type="evidence at protein level"/>
<organism>
    <name type="scientific">Cellvibrio japonicus (strain Ueda107)</name>
    <name type="common">Pseudomonas fluorescens subsp. cellulosa</name>
    <dbReference type="NCBI Taxonomy" id="498211"/>
    <lineage>
        <taxon>Bacteria</taxon>
        <taxon>Pseudomonadati</taxon>
        <taxon>Pseudomonadota</taxon>
        <taxon>Gammaproteobacteria</taxon>
        <taxon>Cellvibrionales</taxon>
        <taxon>Cellvibrionaceae</taxon>
        <taxon>Cellvibrio</taxon>
    </lineage>
</organism>
<evidence type="ECO:0000250" key="1"/>
<evidence type="ECO:0000255" key="2">
    <source>
        <dbReference type="PROSITE-ProRule" id="PRU00523"/>
    </source>
</evidence>
<evidence type="ECO:0000255" key="3">
    <source>
        <dbReference type="PROSITE-ProRule" id="PRU01135"/>
    </source>
</evidence>
<evidence type="ECO:0000256" key="4">
    <source>
        <dbReference type="SAM" id="MobiDB-lite"/>
    </source>
</evidence>
<evidence type="ECO:0000269" key="5">
    <source>
    </source>
</evidence>
<evidence type="ECO:0000305" key="6"/>
<accession>P23031</accession>
<accession>B3PEH9</accession>
<comment type="function">
    <text>Xylanase C contributes to hydrolyze hemicellulose, the major component of plant cell-walls.</text>
</comment>
<comment type="catalytic activity">
    <reaction>
        <text>Hydrolysis of terminal non-reducing alpha-L-arabinofuranoside residues in alpha-L-arabinosides.</text>
        <dbReference type="EC" id="3.2.1.55"/>
    </reaction>
</comment>
<comment type="pathway">
    <text>Glycan metabolism; hemicellulose degradation.</text>
</comment>
<comment type="subcellular location">
    <subcellularLocation>
        <location>Secreted</location>
    </subcellularLocation>
</comment>
<comment type="miscellaneous">
    <text>Acts only on high MW substrates, in which arabinose is linked to a polymeric backbone.</text>
</comment>
<comment type="similarity">
    <text evidence="6">Belongs to the glycosyl hydrolase 62 family.</text>
</comment>
<comment type="sequence caution" evidence="6">
    <conflict type="frameshift">
        <sequence resource="EMBL-CDS" id="CAA38390"/>
    </conflict>
</comment>